<protein>
    <recommendedName>
        <fullName evidence="1">UPF0173 metal-dependent hydrolase BCB4264_A4722</fullName>
    </recommendedName>
</protein>
<comment type="similarity">
    <text evidence="1">Belongs to the UPF0173 family.</text>
</comment>
<accession>B7HFC6</accession>
<gene>
    <name type="ordered locus">BCB4264_A4722</name>
</gene>
<dbReference type="EMBL" id="CP001176">
    <property type="protein sequence ID" value="ACK62613.1"/>
    <property type="molecule type" value="Genomic_DNA"/>
</dbReference>
<dbReference type="RefSeq" id="WP_000868926.1">
    <property type="nucleotide sequence ID" value="NC_011725.1"/>
</dbReference>
<dbReference type="SMR" id="B7HFC6"/>
<dbReference type="KEGG" id="bcb:BCB4264_A4722"/>
<dbReference type="HOGENOM" id="CLU_070010_4_1_9"/>
<dbReference type="Proteomes" id="UP000007096">
    <property type="component" value="Chromosome"/>
</dbReference>
<dbReference type="GO" id="GO:0016787">
    <property type="term" value="F:hydrolase activity"/>
    <property type="evidence" value="ECO:0007669"/>
    <property type="project" value="UniProtKB-UniRule"/>
</dbReference>
<dbReference type="Gene3D" id="3.60.15.10">
    <property type="entry name" value="Ribonuclease Z/Hydroxyacylglutathione hydrolase-like"/>
    <property type="match status" value="1"/>
</dbReference>
<dbReference type="HAMAP" id="MF_00457">
    <property type="entry name" value="UPF0173"/>
    <property type="match status" value="1"/>
</dbReference>
<dbReference type="InterPro" id="IPR001279">
    <property type="entry name" value="Metallo-B-lactamas"/>
</dbReference>
<dbReference type="InterPro" id="IPR036866">
    <property type="entry name" value="RibonucZ/Hydroxyglut_hydro"/>
</dbReference>
<dbReference type="InterPro" id="IPR022877">
    <property type="entry name" value="UPF0173"/>
</dbReference>
<dbReference type="InterPro" id="IPR050114">
    <property type="entry name" value="UPF0173_UPF0282_UlaG_hydrolase"/>
</dbReference>
<dbReference type="NCBIfam" id="NF001911">
    <property type="entry name" value="PRK00685.1"/>
    <property type="match status" value="1"/>
</dbReference>
<dbReference type="PANTHER" id="PTHR43546:SF3">
    <property type="entry name" value="UPF0173 METAL-DEPENDENT HYDROLASE MJ1163"/>
    <property type="match status" value="1"/>
</dbReference>
<dbReference type="PANTHER" id="PTHR43546">
    <property type="entry name" value="UPF0173 METAL-DEPENDENT HYDROLASE MJ1163-RELATED"/>
    <property type="match status" value="1"/>
</dbReference>
<dbReference type="Pfam" id="PF12706">
    <property type="entry name" value="Lactamase_B_2"/>
    <property type="match status" value="1"/>
</dbReference>
<dbReference type="SMART" id="SM00849">
    <property type="entry name" value="Lactamase_B"/>
    <property type="match status" value="1"/>
</dbReference>
<dbReference type="SUPFAM" id="SSF56281">
    <property type="entry name" value="Metallo-hydrolase/oxidoreductase"/>
    <property type="match status" value="1"/>
</dbReference>
<name>Y4722_BACC4</name>
<sequence>MKVSYHGHSVVKIEANGKVILIDPFLTGNPKTDLKAEDVKVDAILLSHGHGDHVGDTVELAKKNNAVVVAPFELATFLSWQGVNTHPMHIGGSHEFDFGKVKLTQAFHGSSYIDEENKTITYTGMPAGILFTAEEKTVYHAGDTALFSDMKLIGELNKVDLAFLPIGDNFTMGPEDAVLAAKWINAKTVVPMHYNTFPVIEQDPYQFVEKLQNCTGKVLEAGESITL</sequence>
<reference key="1">
    <citation type="submission" date="2008-10" db="EMBL/GenBank/DDBJ databases">
        <title>Genome sequence of Bacillus cereus B4264.</title>
        <authorList>
            <person name="Dodson R.J."/>
            <person name="Durkin A.S."/>
            <person name="Rosovitz M.J."/>
            <person name="Rasko D.A."/>
            <person name="Hoffmaster A."/>
            <person name="Ravel J."/>
            <person name="Sutton G."/>
        </authorList>
    </citation>
    <scope>NUCLEOTIDE SEQUENCE [LARGE SCALE GENOMIC DNA]</scope>
    <source>
        <strain>B4264</strain>
    </source>
</reference>
<organism>
    <name type="scientific">Bacillus cereus (strain B4264)</name>
    <dbReference type="NCBI Taxonomy" id="405532"/>
    <lineage>
        <taxon>Bacteria</taxon>
        <taxon>Bacillati</taxon>
        <taxon>Bacillota</taxon>
        <taxon>Bacilli</taxon>
        <taxon>Bacillales</taxon>
        <taxon>Bacillaceae</taxon>
        <taxon>Bacillus</taxon>
        <taxon>Bacillus cereus group</taxon>
    </lineage>
</organism>
<proteinExistence type="inferred from homology"/>
<evidence type="ECO:0000255" key="1">
    <source>
        <dbReference type="HAMAP-Rule" id="MF_00457"/>
    </source>
</evidence>
<feature type="chain" id="PRO_1000197809" description="UPF0173 metal-dependent hydrolase BCB4264_A4722">
    <location>
        <begin position="1"/>
        <end position="227"/>
    </location>
</feature>
<keyword id="KW-0378">Hydrolase</keyword>